<dbReference type="EMBL" id="BX936398">
    <property type="protein sequence ID" value="CAH19454.1"/>
    <property type="molecule type" value="Genomic_DNA"/>
</dbReference>
<dbReference type="RefSeq" id="WP_002215973.1">
    <property type="nucleotide sequence ID" value="NZ_CP009712.1"/>
</dbReference>
<dbReference type="SMR" id="Q66FX1"/>
<dbReference type="GeneID" id="57974887"/>
<dbReference type="KEGG" id="ypo:BZ17_2369"/>
<dbReference type="KEGG" id="yps:YPTB0214"/>
<dbReference type="PATRIC" id="fig|273123.14.peg.2491"/>
<dbReference type="Proteomes" id="UP000001011">
    <property type="component" value="Chromosome"/>
</dbReference>
<dbReference type="GO" id="GO:0005737">
    <property type="term" value="C:cytoplasm"/>
    <property type="evidence" value="ECO:0007669"/>
    <property type="project" value="UniProtKB-SubCell"/>
</dbReference>
<dbReference type="GO" id="GO:0097163">
    <property type="term" value="F:sulfur carrier activity"/>
    <property type="evidence" value="ECO:0007669"/>
    <property type="project" value="UniProtKB-UniRule"/>
</dbReference>
<dbReference type="GO" id="GO:0002143">
    <property type="term" value="P:tRNA wobble position uridine thiolation"/>
    <property type="evidence" value="ECO:0007669"/>
    <property type="project" value="InterPro"/>
</dbReference>
<dbReference type="CDD" id="cd03423">
    <property type="entry name" value="SirA"/>
    <property type="match status" value="1"/>
</dbReference>
<dbReference type="Gene3D" id="3.30.110.40">
    <property type="entry name" value="TusA-like domain"/>
    <property type="match status" value="1"/>
</dbReference>
<dbReference type="HAMAP" id="MF_00413">
    <property type="entry name" value="Thiourid_synth_A"/>
    <property type="match status" value="1"/>
</dbReference>
<dbReference type="InterPro" id="IPR022931">
    <property type="entry name" value="Sulphur_carrier_TusA"/>
</dbReference>
<dbReference type="InterPro" id="IPR001455">
    <property type="entry name" value="TusA-like"/>
</dbReference>
<dbReference type="InterPro" id="IPR036868">
    <property type="entry name" value="TusA-like_sf"/>
</dbReference>
<dbReference type="NCBIfam" id="NF001423">
    <property type="entry name" value="PRK00299.1"/>
    <property type="match status" value="1"/>
</dbReference>
<dbReference type="PANTHER" id="PTHR33279:SF2">
    <property type="entry name" value="SULFUR CARRIER PROTEIN TUSA"/>
    <property type="match status" value="1"/>
</dbReference>
<dbReference type="PANTHER" id="PTHR33279">
    <property type="entry name" value="SULFUR CARRIER PROTEIN YEDF-RELATED"/>
    <property type="match status" value="1"/>
</dbReference>
<dbReference type="Pfam" id="PF01206">
    <property type="entry name" value="TusA"/>
    <property type="match status" value="1"/>
</dbReference>
<dbReference type="SUPFAM" id="SSF64307">
    <property type="entry name" value="SirA-like"/>
    <property type="match status" value="1"/>
</dbReference>
<dbReference type="PROSITE" id="PS01148">
    <property type="entry name" value="UPF0033"/>
    <property type="match status" value="1"/>
</dbReference>
<keyword id="KW-0963">Cytoplasm</keyword>
<keyword id="KW-0819">tRNA processing</keyword>
<evidence type="ECO:0000255" key="1">
    <source>
        <dbReference type="HAMAP-Rule" id="MF_00413"/>
    </source>
</evidence>
<proteinExistence type="inferred from homology"/>
<organism>
    <name type="scientific">Yersinia pseudotuberculosis serotype I (strain IP32953)</name>
    <dbReference type="NCBI Taxonomy" id="273123"/>
    <lineage>
        <taxon>Bacteria</taxon>
        <taxon>Pseudomonadati</taxon>
        <taxon>Pseudomonadota</taxon>
        <taxon>Gammaproteobacteria</taxon>
        <taxon>Enterobacterales</taxon>
        <taxon>Yersiniaceae</taxon>
        <taxon>Yersinia</taxon>
    </lineage>
</organism>
<reference key="1">
    <citation type="journal article" date="2004" name="Proc. Natl. Acad. Sci. U.S.A.">
        <title>Insights into the evolution of Yersinia pestis through whole-genome comparison with Yersinia pseudotuberculosis.</title>
        <authorList>
            <person name="Chain P.S.G."/>
            <person name="Carniel E."/>
            <person name="Larimer F.W."/>
            <person name="Lamerdin J."/>
            <person name="Stoutland P.O."/>
            <person name="Regala W.M."/>
            <person name="Georgescu A.M."/>
            <person name="Vergez L.M."/>
            <person name="Land M.L."/>
            <person name="Motin V.L."/>
            <person name="Brubaker R.R."/>
            <person name="Fowler J."/>
            <person name="Hinnebusch J."/>
            <person name="Marceau M."/>
            <person name="Medigue C."/>
            <person name="Simonet M."/>
            <person name="Chenal-Francisque V."/>
            <person name="Souza B."/>
            <person name="Dacheux D."/>
            <person name="Elliott J.M."/>
            <person name="Derbise A."/>
            <person name="Hauser L.J."/>
            <person name="Garcia E."/>
        </authorList>
    </citation>
    <scope>NUCLEOTIDE SEQUENCE [LARGE SCALE GENOMIC DNA]</scope>
    <source>
        <strain>IP32953</strain>
    </source>
</reference>
<protein>
    <recommendedName>
        <fullName evidence="1">Sulfur carrier protein TusA</fullName>
    </recommendedName>
    <alternativeName>
        <fullName evidence="1">Sulfur mediator TusA</fullName>
    </alternativeName>
    <alternativeName>
        <fullName evidence="1">Sulfur transfer protein TusA</fullName>
    </alternativeName>
    <alternativeName>
        <fullName evidence="1">tRNA 2-thiouridine synthesizing protein A</fullName>
    </alternativeName>
</protein>
<sequence>MTDIFANPDKTLDALGLRCPEPVMMVRKTVRHMEEGQTLLIIADDPATTRDIPGFCRFMDHQLLAQDTEQTPYRYLVRKGITAG</sequence>
<name>TUSA_YERPS</name>
<feature type="chain" id="PRO_0000159061" description="Sulfur carrier protein TusA">
    <location>
        <begin position="1"/>
        <end position="84"/>
    </location>
</feature>
<feature type="active site" description="Cysteine persulfide intermediate" evidence="1">
    <location>
        <position position="19"/>
    </location>
</feature>
<comment type="function">
    <text evidence="1">Sulfur carrier protein involved in sulfur trafficking in the cell. Part of a sulfur-relay system required for 2-thiolation during synthesis of 2-thiouridine of the modified wobble base 5-methylaminomethyl-2-thiouridine (mnm(5)s(2)U) in tRNA. Interacts with IscS and stimulates its cysteine desulfurase activity. Accepts an activated sulfur from IscS, which is then transferred to TusD, and thus determines the direction of sulfur flow from IscS to 2-thiouridine formation. Also appears to be involved in sulfur transfer for the biosynthesis of molybdopterin.</text>
</comment>
<comment type="pathway">
    <text evidence="1">tRNA modification.</text>
</comment>
<comment type="subunit">
    <text evidence="1">Interacts with IscS.</text>
</comment>
<comment type="subcellular location">
    <subcellularLocation>
        <location evidence="1">Cytoplasm</location>
    </subcellularLocation>
</comment>
<comment type="similarity">
    <text evidence="1">Belongs to the sulfur carrier protein TusA family.</text>
</comment>
<accession>Q66FX1</accession>
<gene>
    <name evidence="1" type="primary">tusA</name>
    <name type="ordered locus">YPTB0214</name>
</gene>